<accession>A2REP8</accession>
<sequence>MGKYFGTDGVRGEANVELTPELAFKLGRFGGYVLSQHETERPKVFVARDTRISGEMLESALIAGLLSVGIEVYKLGVLATPGVSYLVRTEKASAGVMISASHNPALDNGIKFFGNDGFKLADDQELEIEALLDAPEDTLPRPSAEGLGTLVDYPEGLRKYEKFLVTTGTDLSGMTVALDTANGAASVSARDVFLDLNAEIAVIGEKPNGLNINDGVGSTHPEQLQELVKETGADLGLAFDGDSDRLIAVDETGEIVDGDRIMFIIGKYLSEKGLLAHNTIVTTVMSNLGFHKALDKQGINKAITAVGDRYVVEEMRSSGYNLGGEQSGHVIIMDYNTTGDGQLTAIQLAKVMKETGKSLSELAAEVTIYPQKLVNIRVENSMKDRAMEVPAIANIIAKMEDEMAGNGRILVRPSGTEPLLRVMAEAPTDAEVDYYVDTIADVVRTEIGCDN</sequence>
<organism>
    <name type="scientific">Streptococcus pyogenes serotype M5 (strain Manfredo)</name>
    <dbReference type="NCBI Taxonomy" id="160491"/>
    <lineage>
        <taxon>Bacteria</taxon>
        <taxon>Bacillati</taxon>
        <taxon>Bacillota</taxon>
        <taxon>Bacilli</taxon>
        <taxon>Lactobacillales</taxon>
        <taxon>Streptococcaceae</taxon>
        <taxon>Streptococcus</taxon>
    </lineage>
</organism>
<evidence type="ECO:0000255" key="1">
    <source>
        <dbReference type="HAMAP-Rule" id="MF_01554"/>
    </source>
</evidence>
<gene>
    <name evidence="1" type="primary">glmM</name>
    <name type="ordered locus">SpyM50996</name>
</gene>
<dbReference type="EC" id="5.4.2.10" evidence="1"/>
<dbReference type="EMBL" id="AM295007">
    <property type="protein sequence ID" value="CAM30323.1"/>
    <property type="molecule type" value="Genomic_DNA"/>
</dbReference>
<dbReference type="RefSeq" id="WP_011184463.1">
    <property type="nucleotide sequence ID" value="NC_009332.1"/>
</dbReference>
<dbReference type="SMR" id="A2REP8"/>
<dbReference type="KEGG" id="spf:SpyM50996"/>
<dbReference type="HOGENOM" id="CLU_016950_7_0_9"/>
<dbReference type="GO" id="GO:0005829">
    <property type="term" value="C:cytosol"/>
    <property type="evidence" value="ECO:0007669"/>
    <property type="project" value="TreeGrafter"/>
</dbReference>
<dbReference type="GO" id="GO:0000287">
    <property type="term" value="F:magnesium ion binding"/>
    <property type="evidence" value="ECO:0007669"/>
    <property type="project" value="UniProtKB-UniRule"/>
</dbReference>
<dbReference type="GO" id="GO:0008966">
    <property type="term" value="F:phosphoglucosamine mutase activity"/>
    <property type="evidence" value="ECO:0007669"/>
    <property type="project" value="UniProtKB-UniRule"/>
</dbReference>
<dbReference type="GO" id="GO:0004615">
    <property type="term" value="F:phosphomannomutase activity"/>
    <property type="evidence" value="ECO:0007669"/>
    <property type="project" value="TreeGrafter"/>
</dbReference>
<dbReference type="GO" id="GO:0005975">
    <property type="term" value="P:carbohydrate metabolic process"/>
    <property type="evidence" value="ECO:0007669"/>
    <property type="project" value="InterPro"/>
</dbReference>
<dbReference type="GO" id="GO:0009252">
    <property type="term" value="P:peptidoglycan biosynthetic process"/>
    <property type="evidence" value="ECO:0007669"/>
    <property type="project" value="TreeGrafter"/>
</dbReference>
<dbReference type="GO" id="GO:0006048">
    <property type="term" value="P:UDP-N-acetylglucosamine biosynthetic process"/>
    <property type="evidence" value="ECO:0007669"/>
    <property type="project" value="TreeGrafter"/>
</dbReference>
<dbReference type="CDD" id="cd05802">
    <property type="entry name" value="GlmM"/>
    <property type="match status" value="1"/>
</dbReference>
<dbReference type="FunFam" id="3.30.310.50:FF:000001">
    <property type="entry name" value="Phosphoglucosamine mutase"/>
    <property type="match status" value="1"/>
</dbReference>
<dbReference type="FunFam" id="3.40.120.10:FF:000001">
    <property type="entry name" value="Phosphoglucosamine mutase"/>
    <property type="match status" value="1"/>
</dbReference>
<dbReference type="FunFam" id="3.40.120.10:FF:000002">
    <property type="entry name" value="Phosphoglucosamine mutase"/>
    <property type="match status" value="1"/>
</dbReference>
<dbReference type="Gene3D" id="3.40.120.10">
    <property type="entry name" value="Alpha-D-Glucose-1,6-Bisphosphate, subunit A, domain 3"/>
    <property type="match status" value="3"/>
</dbReference>
<dbReference type="Gene3D" id="3.30.310.50">
    <property type="entry name" value="Alpha-D-phosphohexomutase, C-terminal domain"/>
    <property type="match status" value="1"/>
</dbReference>
<dbReference type="HAMAP" id="MF_01554_B">
    <property type="entry name" value="GlmM_B"/>
    <property type="match status" value="1"/>
</dbReference>
<dbReference type="InterPro" id="IPR005844">
    <property type="entry name" value="A-D-PHexomutase_a/b/a-I"/>
</dbReference>
<dbReference type="InterPro" id="IPR016055">
    <property type="entry name" value="A-D-PHexomutase_a/b/a-I/II/III"/>
</dbReference>
<dbReference type="InterPro" id="IPR005845">
    <property type="entry name" value="A-D-PHexomutase_a/b/a-II"/>
</dbReference>
<dbReference type="InterPro" id="IPR005846">
    <property type="entry name" value="A-D-PHexomutase_a/b/a-III"/>
</dbReference>
<dbReference type="InterPro" id="IPR005843">
    <property type="entry name" value="A-D-PHexomutase_C"/>
</dbReference>
<dbReference type="InterPro" id="IPR036900">
    <property type="entry name" value="A-D-PHexomutase_C_sf"/>
</dbReference>
<dbReference type="InterPro" id="IPR016066">
    <property type="entry name" value="A-D-PHexomutase_CS"/>
</dbReference>
<dbReference type="InterPro" id="IPR005841">
    <property type="entry name" value="Alpha-D-phosphohexomutase_SF"/>
</dbReference>
<dbReference type="InterPro" id="IPR006352">
    <property type="entry name" value="GlmM_bact"/>
</dbReference>
<dbReference type="InterPro" id="IPR050060">
    <property type="entry name" value="Phosphoglucosamine_mutase"/>
</dbReference>
<dbReference type="NCBIfam" id="TIGR01455">
    <property type="entry name" value="glmM"/>
    <property type="match status" value="1"/>
</dbReference>
<dbReference type="PANTHER" id="PTHR42946:SF1">
    <property type="entry name" value="PHOSPHOGLUCOMUTASE (ALPHA-D-GLUCOSE-1,6-BISPHOSPHATE-DEPENDENT)"/>
    <property type="match status" value="1"/>
</dbReference>
<dbReference type="PANTHER" id="PTHR42946">
    <property type="entry name" value="PHOSPHOHEXOSE MUTASE"/>
    <property type="match status" value="1"/>
</dbReference>
<dbReference type="Pfam" id="PF02878">
    <property type="entry name" value="PGM_PMM_I"/>
    <property type="match status" value="1"/>
</dbReference>
<dbReference type="Pfam" id="PF02879">
    <property type="entry name" value="PGM_PMM_II"/>
    <property type="match status" value="1"/>
</dbReference>
<dbReference type="Pfam" id="PF02880">
    <property type="entry name" value="PGM_PMM_III"/>
    <property type="match status" value="1"/>
</dbReference>
<dbReference type="Pfam" id="PF00408">
    <property type="entry name" value="PGM_PMM_IV"/>
    <property type="match status" value="1"/>
</dbReference>
<dbReference type="PRINTS" id="PR00509">
    <property type="entry name" value="PGMPMM"/>
</dbReference>
<dbReference type="SUPFAM" id="SSF55957">
    <property type="entry name" value="Phosphoglucomutase, C-terminal domain"/>
    <property type="match status" value="1"/>
</dbReference>
<dbReference type="SUPFAM" id="SSF53738">
    <property type="entry name" value="Phosphoglucomutase, first 3 domains"/>
    <property type="match status" value="3"/>
</dbReference>
<dbReference type="PROSITE" id="PS00710">
    <property type="entry name" value="PGM_PMM"/>
    <property type="match status" value="1"/>
</dbReference>
<name>GLMM_STRPG</name>
<keyword id="KW-0413">Isomerase</keyword>
<keyword id="KW-0460">Magnesium</keyword>
<keyword id="KW-0479">Metal-binding</keyword>
<keyword id="KW-0597">Phosphoprotein</keyword>
<comment type="function">
    <text evidence="1">Catalyzes the conversion of glucosamine-6-phosphate to glucosamine-1-phosphate.</text>
</comment>
<comment type="catalytic activity">
    <reaction evidence="1">
        <text>alpha-D-glucosamine 1-phosphate = D-glucosamine 6-phosphate</text>
        <dbReference type="Rhea" id="RHEA:23424"/>
        <dbReference type="ChEBI" id="CHEBI:58516"/>
        <dbReference type="ChEBI" id="CHEBI:58725"/>
        <dbReference type="EC" id="5.4.2.10"/>
    </reaction>
</comment>
<comment type="cofactor">
    <cofactor evidence="1">
        <name>Mg(2+)</name>
        <dbReference type="ChEBI" id="CHEBI:18420"/>
    </cofactor>
    <text evidence="1">Binds 1 Mg(2+) ion per subunit.</text>
</comment>
<comment type="PTM">
    <text evidence="1">Activated by phosphorylation.</text>
</comment>
<comment type="similarity">
    <text evidence="1">Belongs to the phosphohexose mutase family.</text>
</comment>
<feature type="chain" id="PRO_0000301391" description="Phosphoglucosamine mutase">
    <location>
        <begin position="1"/>
        <end position="451"/>
    </location>
</feature>
<feature type="active site" description="Phosphoserine intermediate" evidence="1">
    <location>
        <position position="101"/>
    </location>
</feature>
<feature type="binding site" description="via phosphate group" evidence="1">
    <location>
        <position position="101"/>
    </location>
    <ligand>
        <name>Mg(2+)</name>
        <dbReference type="ChEBI" id="CHEBI:18420"/>
    </ligand>
</feature>
<feature type="binding site" evidence="1">
    <location>
        <position position="240"/>
    </location>
    <ligand>
        <name>Mg(2+)</name>
        <dbReference type="ChEBI" id="CHEBI:18420"/>
    </ligand>
</feature>
<feature type="binding site" evidence="1">
    <location>
        <position position="242"/>
    </location>
    <ligand>
        <name>Mg(2+)</name>
        <dbReference type="ChEBI" id="CHEBI:18420"/>
    </ligand>
</feature>
<feature type="binding site" evidence="1">
    <location>
        <position position="244"/>
    </location>
    <ligand>
        <name>Mg(2+)</name>
        <dbReference type="ChEBI" id="CHEBI:18420"/>
    </ligand>
</feature>
<feature type="modified residue" description="Phosphoserine" evidence="1">
    <location>
        <position position="101"/>
    </location>
</feature>
<reference key="1">
    <citation type="journal article" date="2007" name="J. Bacteriol.">
        <title>Complete genome of acute rheumatic fever-associated serotype M5 Streptococcus pyogenes strain Manfredo.</title>
        <authorList>
            <person name="Holden M.T.G."/>
            <person name="Scott A."/>
            <person name="Cherevach I."/>
            <person name="Chillingworth T."/>
            <person name="Churcher C."/>
            <person name="Cronin A."/>
            <person name="Dowd L."/>
            <person name="Feltwell T."/>
            <person name="Hamlin N."/>
            <person name="Holroyd S."/>
            <person name="Jagels K."/>
            <person name="Moule S."/>
            <person name="Mungall K."/>
            <person name="Quail M.A."/>
            <person name="Price C."/>
            <person name="Rabbinowitsch E."/>
            <person name="Sharp S."/>
            <person name="Skelton J."/>
            <person name="Whitehead S."/>
            <person name="Barrell B.G."/>
            <person name="Kehoe M."/>
            <person name="Parkhill J."/>
        </authorList>
    </citation>
    <scope>NUCLEOTIDE SEQUENCE [LARGE SCALE GENOMIC DNA]</scope>
    <source>
        <strain>Manfredo</strain>
    </source>
</reference>
<proteinExistence type="inferred from homology"/>
<protein>
    <recommendedName>
        <fullName evidence="1">Phosphoglucosamine mutase</fullName>
        <ecNumber evidence="1">5.4.2.10</ecNumber>
    </recommendedName>
</protein>